<reference key="1">
    <citation type="journal article" date="2023" name="Biochem. Pharmacol.">
        <title>Venom composition and bioactive RF-amide peptide toxins of the saddleback caterpillar, Acharia stimulea (Lepidoptera: Limacodidae).</title>
        <authorList>
            <person name="Goudarzi M.H."/>
            <person name="Eagles D.A."/>
            <person name="Lim J."/>
            <person name="Biggs K.A."/>
            <person name="Kotze A.C."/>
            <person name="Ruffell A.P."/>
            <person name="Fairlie D.P."/>
            <person name="King G.F."/>
            <person name="Walker A.A."/>
        </authorList>
    </citation>
    <scope>NUCLEOTIDE SEQUENCE [LARGE SCALE MRNA]</scope>
    <scope>FUNCTION</scope>
    <scope>SUBCELLULAR LOCATION</scope>
    <scope>SYNTHESIS OF 24-37</scope>
    <scope>PROBABLE AMIDATION AT PHE-37</scope>
    <scope>TOXIC DOSE</scope>
</reference>
<name>RF54_ACHST</name>
<keyword id="KW-0027">Amidation</keyword>
<keyword id="KW-1213">G-protein coupled receptor impairing toxin</keyword>
<keyword id="KW-0964">Secreted</keyword>
<keyword id="KW-0732">Signal</keyword>
<keyword id="KW-0800">Toxin</keyword>
<proteinExistence type="evidence at protein level"/>
<accession>P0DX49</accession>
<protein>
    <recommendedName>
        <fullName evidence="3">U-limacoditoxin(13)-As54</fullName>
        <shortName evidence="3">U-LCTX(13)-As54</shortName>
    </recommendedName>
</protein>
<organism>
    <name type="scientific">Acharia stimulea</name>
    <name type="common">Saddleback caterpillar moth</name>
    <name type="synonym">Sibine stimulea</name>
    <dbReference type="NCBI Taxonomy" id="691692"/>
    <lineage>
        <taxon>Eukaryota</taxon>
        <taxon>Metazoa</taxon>
        <taxon>Ecdysozoa</taxon>
        <taxon>Arthropoda</taxon>
        <taxon>Hexapoda</taxon>
        <taxon>Insecta</taxon>
        <taxon>Pterygota</taxon>
        <taxon>Neoptera</taxon>
        <taxon>Endopterygota</taxon>
        <taxon>Lepidoptera</taxon>
        <taxon>Glossata</taxon>
        <taxon>Ditrysia</taxon>
        <taxon>Zygaenoidea</taxon>
        <taxon>Limacodidae</taxon>
        <taxon>Acharia</taxon>
    </lineage>
</organism>
<dbReference type="EMBL" id="OQ473093">
    <property type="protein sequence ID" value="WDQ26749.1"/>
    <property type="molecule type" value="mRNA"/>
</dbReference>
<dbReference type="GO" id="GO:0005576">
    <property type="term" value="C:extracellular region"/>
    <property type="evidence" value="ECO:0007669"/>
    <property type="project" value="UniProtKB-SubCell"/>
</dbReference>
<dbReference type="GO" id="GO:0090729">
    <property type="term" value="F:toxin activity"/>
    <property type="evidence" value="ECO:0007669"/>
    <property type="project" value="UniProtKB-KW"/>
</dbReference>
<feature type="signal peptide" evidence="1">
    <location>
        <begin position="1"/>
        <end position="23"/>
    </location>
</feature>
<feature type="peptide" id="PRO_0000459000" description="U-limacoditoxin(13)-As54" evidence="2 4">
    <location>
        <begin position="24"/>
        <end position="37"/>
    </location>
</feature>
<feature type="modified residue" description="Phenylalanine amide" evidence="2">
    <location>
        <position position="37"/>
    </location>
</feature>
<sequence>MSKYIVLLVVSAIALLQFSMIECNTEDLGTIKQPLRFGK</sequence>
<comment type="function">
    <text evidence="2">Strongly activates (at 30 uM) the human neuropeptide FF receptor 1 (NPFF1R), a G-protein coupled receptor, with an effect that is equipotent to the endogenous RFRP-1 ligand in activating NPFFR1. Is toxic when injected into Drosophila melanogaster. Also shows a moderate anthelmintic activity against the parasitic nematode H.contortus (drug susceptible Kirby isolate) (IC(50)=20.1 uM).</text>
</comment>
<comment type="subcellular location">
    <subcellularLocation>
        <location evidence="2">Secreted</location>
    </subcellularLocation>
</comment>
<comment type="tissue specificity">
    <text evidence="5">Expressed by the venom secretory cell of the spine. The spine is a cuticular structure containing a single large nucleated venom-secreting cell at its base. It is an independent unit capable of producing, storing and injecting venom. On the back of A.stimulea caterpillars, spines are grouped together by 50 to 100 to form scoli, of which there are eight.</text>
</comment>
<comment type="developmental stage">
    <text evidence="4">Only secreted by larvae. Adult moth do not have spines.</text>
</comment>
<comment type="toxic dose">
    <text evidence="2">LD(50) is 6.0 nmol/g at 2 hours after injection into Drosophila melanogaster. LD(50) is 3.6 nmol/g at 24 hours after injection into the same species.</text>
</comment>
<comment type="miscellaneous">
    <text evidence="2">Negative results: has no effect on human neuropeptide FF receptor 2 (NPFFR2) and kisspeptin receptor 1 (KISS1R). Has mild effect on ASIC1a channels (31% inhibition at 10 uM) and no effect on ASIC1b channels.</text>
</comment>
<comment type="similarity">
    <text evidence="4">Belongs to the FARP (FMRFamide related peptide) family.</text>
</comment>
<evidence type="ECO:0000255" key="1"/>
<evidence type="ECO:0000269" key="2">
    <source>
    </source>
</evidence>
<evidence type="ECO:0000303" key="3">
    <source>
    </source>
</evidence>
<evidence type="ECO:0000305" key="4"/>
<evidence type="ECO:0000305" key="5">
    <source>
    </source>
</evidence>